<gene>
    <name evidence="1" type="primary">rpsB</name>
    <name type="ordered locus">XOO1867</name>
</gene>
<sequence length="267" mass="29491">MPQVTMRQMLEAGVHFGHQCRYWHPNMAQYIFGARGKIHIINLEKTVPLFNDAMNYLSSIAQKRGTILFLGTKRSARASIKEEAERCGMPFMTQRWLGGTLTNFRTVKQSVARLKELEAAETDGTFDKLVKHEVLSLRREREKLDASLGGIKEMNRLPDAIFVIDIGHEDIAIKEAKKLGIPVIAVVDTNYNPNLVDYAIPGNDDAIRAVQLYARAAADAVLEGKAAAPNSASVREEEFSAESADEGKGRRAPAKKGEKKADAPAAE</sequence>
<proteinExistence type="inferred from homology"/>
<feature type="chain" id="PRO_1000004115" description="Small ribosomal subunit protein uS2">
    <location>
        <begin position="1"/>
        <end position="267"/>
    </location>
</feature>
<feature type="region of interest" description="Disordered" evidence="2">
    <location>
        <begin position="226"/>
        <end position="267"/>
    </location>
</feature>
<feature type="compositionally biased region" description="Basic and acidic residues" evidence="2">
    <location>
        <begin position="245"/>
        <end position="267"/>
    </location>
</feature>
<protein>
    <recommendedName>
        <fullName evidence="1">Small ribosomal subunit protein uS2</fullName>
    </recommendedName>
    <alternativeName>
        <fullName evidence="3">30S ribosomal protein S2</fullName>
    </alternativeName>
</protein>
<evidence type="ECO:0000255" key="1">
    <source>
        <dbReference type="HAMAP-Rule" id="MF_00291"/>
    </source>
</evidence>
<evidence type="ECO:0000256" key="2">
    <source>
        <dbReference type="SAM" id="MobiDB-lite"/>
    </source>
</evidence>
<evidence type="ECO:0000305" key="3"/>
<comment type="similarity">
    <text evidence="1">Belongs to the universal ribosomal protein uS2 family.</text>
</comment>
<keyword id="KW-0687">Ribonucleoprotein</keyword>
<keyword id="KW-0689">Ribosomal protein</keyword>
<organism>
    <name type="scientific">Xanthomonas oryzae pv. oryzae (strain MAFF 311018)</name>
    <dbReference type="NCBI Taxonomy" id="342109"/>
    <lineage>
        <taxon>Bacteria</taxon>
        <taxon>Pseudomonadati</taxon>
        <taxon>Pseudomonadota</taxon>
        <taxon>Gammaproteobacteria</taxon>
        <taxon>Lysobacterales</taxon>
        <taxon>Lysobacteraceae</taxon>
        <taxon>Xanthomonas</taxon>
    </lineage>
</organism>
<accession>Q2P4A5</accession>
<name>RS2_XANOM</name>
<dbReference type="EMBL" id="AP008229">
    <property type="protein sequence ID" value="BAE68622.1"/>
    <property type="molecule type" value="Genomic_DNA"/>
</dbReference>
<dbReference type="RefSeq" id="WP_011258701.1">
    <property type="nucleotide sequence ID" value="NC_007705.1"/>
</dbReference>
<dbReference type="SMR" id="Q2P4A5"/>
<dbReference type="GeneID" id="77336859"/>
<dbReference type="KEGG" id="xom:XOO1867"/>
<dbReference type="HOGENOM" id="CLU_040318_1_2_6"/>
<dbReference type="GO" id="GO:0022627">
    <property type="term" value="C:cytosolic small ribosomal subunit"/>
    <property type="evidence" value="ECO:0007669"/>
    <property type="project" value="TreeGrafter"/>
</dbReference>
<dbReference type="GO" id="GO:0003735">
    <property type="term" value="F:structural constituent of ribosome"/>
    <property type="evidence" value="ECO:0007669"/>
    <property type="project" value="InterPro"/>
</dbReference>
<dbReference type="GO" id="GO:0006412">
    <property type="term" value="P:translation"/>
    <property type="evidence" value="ECO:0007669"/>
    <property type="project" value="UniProtKB-UniRule"/>
</dbReference>
<dbReference type="CDD" id="cd01425">
    <property type="entry name" value="RPS2"/>
    <property type="match status" value="1"/>
</dbReference>
<dbReference type="FunFam" id="1.10.287.610:FF:000001">
    <property type="entry name" value="30S ribosomal protein S2"/>
    <property type="match status" value="1"/>
</dbReference>
<dbReference type="Gene3D" id="3.40.50.10490">
    <property type="entry name" value="Glucose-6-phosphate isomerase like protein, domain 1"/>
    <property type="match status" value="1"/>
</dbReference>
<dbReference type="Gene3D" id="1.10.287.610">
    <property type="entry name" value="Helix hairpin bin"/>
    <property type="match status" value="1"/>
</dbReference>
<dbReference type="HAMAP" id="MF_00291_B">
    <property type="entry name" value="Ribosomal_uS2_B"/>
    <property type="match status" value="1"/>
</dbReference>
<dbReference type="InterPro" id="IPR001865">
    <property type="entry name" value="Ribosomal_uS2"/>
</dbReference>
<dbReference type="InterPro" id="IPR005706">
    <property type="entry name" value="Ribosomal_uS2_bac/mit/plastid"/>
</dbReference>
<dbReference type="InterPro" id="IPR018130">
    <property type="entry name" value="Ribosomal_uS2_CS"/>
</dbReference>
<dbReference type="InterPro" id="IPR023591">
    <property type="entry name" value="Ribosomal_uS2_flav_dom_sf"/>
</dbReference>
<dbReference type="NCBIfam" id="TIGR01011">
    <property type="entry name" value="rpsB_bact"/>
    <property type="match status" value="1"/>
</dbReference>
<dbReference type="PANTHER" id="PTHR12534">
    <property type="entry name" value="30S RIBOSOMAL PROTEIN S2 PROKARYOTIC AND ORGANELLAR"/>
    <property type="match status" value="1"/>
</dbReference>
<dbReference type="PANTHER" id="PTHR12534:SF0">
    <property type="entry name" value="SMALL RIBOSOMAL SUBUNIT PROTEIN US2M"/>
    <property type="match status" value="1"/>
</dbReference>
<dbReference type="Pfam" id="PF00318">
    <property type="entry name" value="Ribosomal_S2"/>
    <property type="match status" value="1"/>
</dbReference>
<dbReference type="PRINTS" id="PR00395">
    <property type="entry name" value="RIBOSOMALS2"/>
</dbReference>
<dbReference type="SUPFAM" id="SSF52313">
    <property type="entry name" value="Ribosomal protein S2"/>
    <property type="match status" value="1"/>
</dbReference>
<dbReference type="PROSITE" id="PS00962">
    <property type="entry name" value="RIBOSOMAL_S2_1"/>
    <property type="match status" value="1"/>
</dbReference>
<dbReference type="PROSITE" id="PS00963">
    <property type="entry name" value="RIBOSOMAL_S2_2"/>
    <property type="match status" value="1"/>
</dbReference>
<reference key="1">
    <citation type="journal article" date="2005" name="Jpn. Agric. Res. Q.">
        <title>Genome sequence of Xanthomonas oryzae pv. oryzae suggests contribution of large numbers of effector genes and insertion sequences to its race diversity.</title>
        <authorList>
            <person name="Ochiai H."/>
            <person name="Inoue Y."/>
            <person name="Takeya M."/>
            <person name="Sasaki A."/>
            <person name="Kaku H."/>
        </authorList>
    </citation>
    <scope>NUCLEOTIDE SEQUENCE [LARGE SCALE GENOMIC DNA]</scope>
    <source>
        <strain>MAFF 311018</strain>
    </source>
</reference>